<comment type="function">
    <text evidence="1">The RuvA-RuvB-RuvC complex processes Holliday junction (HJ) DNA during genetic recombination and DNA repair, while the RuvA-RuvB complex plays an important role in the rescue of blocked DNA replication forks via replication fork reversal (RFR). RuvA specifically binds to HJ cruciform DNA, conferring on it an open structure. The RuvB hexamer acts as an ATP-dependent pump, pulling dsDNA into and through the RuvAB complex. RuvB forms 2 homohexamers on either side of HJ DNA bound by 1 or 2 RuvA tetramers; 4 subunits per hexamer contact DNA at a time. Coordinated motions by a converter formed by DNA-disengaged RuvB subunits stimulates ATP hydrolysis and nucleotide exchange. Immobilization of the converter enables RuvB to convert the ATP-contained energy into a lever motion, pulling 2 nucleotides of DNA out of the RuvA tetramer per ATP hydrolyzed, thus driving DNA branch migration. The RuvB motors rotate together with the DNA substrate, which together with the progressing nucleotide cycle form the mechanistic basis for DNA recombination by continuous HJ branch migration. Branch migration allows RuvC to scan DNA until it finds its consensus sequence, where it cleaves and resolves cruciform DNA.</text>
</comment>
<comment type="catalytic activity">
    <reaction evidence="1">
        <text>ATP + H2O = ADP + phosphate + H(+)</text>
        <dbReference type="Rhea" id="RHEA:13065"/>
        <dbReference type="ChEBI" id="CHEBI:15377"/>
        <dbReference type="ChEBI" id="CHEBI:15378"/>
        <dbReference type="ChEBI" id="CHEBI:30616"/>
        <dbReference type="ChEBI" id="CHEBI:43474"/>
        <dbReference type="ChEBI" id="CHEBI:456216"/>
    </reaction>
</comment>
<comment type="subunit">
    <text evidence="1">Homohexamer. Forms an RuvA(8)-RuvB(12)-Holliday junction (HJ) complex. HJ DNA is sandwiched between 2 RuvA tetramers; dsDNA enters through RuvA and exits via RuvB. An RuvB hexamer assembles on each DNA strand where it exits the tetramer. Each RuvB hexamer is contacted by two RuvA subunits (via domain III) on 2 adjacent RuvB subunits; this complex drives branch migration. In the full resolvosome a probable DNA-RuvA(4)-RuvB(12)-RuvC(2) complex forms which resolves the HJ.</text>
</comment>
<comment type="subcellular location">
    <subcellularLocation>
        <location evidence="1">Cytoplasm</location>
    </subcellularLocation>
</comment>
<comment type="domain">
    <text evidence="1">Has 3 domains, the large (RuvB-L) and small ATPase (RuvB-S) domains and the C-terminal head (RuvB-H) domain. The head domain binds DNA, while the ATPase domains jointly bind ATP, ADP or are empty depending on the state of the subunit in the translocation cycle. During a single DNA translocation step the structure of each domain remains the same, but their relative positions change.</text>
</comment>
<comment type="similarity">
    <text evidence="1">Belongs to the RuvB family.</text>
</comment>
<protein>
    <recommendedName>
        <fullName evidence="1">Holliday junction branch migration complex subunit RuvB</fullName>
        <ecNumber evidence="1">3.6.4.-</ecNumber>
    </recommendedName>
</protein>
<evidence type="ECO:0000255" key="1">
    <source>
        <dbReference type="HAMAP-Rule" id="MF_00016"/>
    </source>
</evidence>
<feature type="chain" id="PRO_1000116658" description="Holliday junction branch migration complex subunit RuvB">
    <location>
        <begin position="1"/>
        <end position="332"/>
    </location>
</feature>
<feature type="region of interest" description="Large ATPase domain (RuvB-L)" evidence="1">
    <location>
        <begin position="1"/>
        <end position="181"/>
    </location>
</feature>
<feature type="region of interest" description="Small ATPAse domain (RuvB-S)" evidence="1">
    <location>
        <begin position="182"/>
        <end position="252"/>
    </location>
</feature>
<feature type="region of interest" description="Head domain (RuvB-H)" evidence="1">
    <location>
        <begin position="255"/>
        <end position="332"/>
    </location>
</feature>
<feature type="binding site" evidence="1">
    <location>
        <position position="20"/>
    </location>
    <ligand>
        <name>ATP</name>
        <dbReference type="ChEBI" id="CHEBI:30616"/>
    </ligand>
</feature>
<feature type="binding site" evidence="1">
    <location>
        <position position="21"/>
    </location>
    <ligand>
        <name>ATP</name>
        <dbReference type="ChEBI" id="CHEBI:30616"/>
    </ligand>
</feature>
<feature type="binding site" evidence="1">
    <location>
        <position position="62"/>
    </location>
    <ligand>
        <name>ATP</name>
        <dbReference type="ChEBI" id="CHEBI:30616"/>
    </ligand>
</feature>
<feature type="binding site" evidence="1">
    <location>
        <position position="65"/>
    </location>
    <ligand>
        <name>ATP</name>
        <dbReference type="ChEBI" id="CHEBI:30616"/>
    </ligand>
</feature>
<feature type="binding site" evidence="1">
    <location>
        <position position="66"/>
    </location>
    <ligand>
        <name>ATP</name>
        <dbReference type="ChEBI" id="CHEBI:30616"/>
    </ligand>
</feature>
<feature type="binding site" evidence="1">
    <location>
        <position position="66"/>
    </location>
    <ligand>
        <name>Mg(2+)</name>
        <dbReference type="ChEBI" id="CHEBI:18420"/>
    </ligand>
</feature>
<feature type="binding site" evidence="1">
    <location>
        <position position="67"/>
    </location>
    <ligand>
        <name>ATP</name>
        <dbReference type="ChEBI" id="CHEBI:30616"/>
    </ligand>
</feature>
<feature type="binding site" evidence="1">
    <location>
        <begin position="128"/>
        <end position="130"/>
    </location>
    <ligand>
        <name>ATP</name>
        <dbReference type="ChEBI" id="CHEBI:30616"/>
    </ligand>
</feature>
<feature type="binding site" evidence="1">
    <location>
        <position position="171"/>
    </location>
    <ligand>
        <name>ATP</name>
        <dbReference type="ChEBI" id="CHEBI:30616"/>
    </ligand>
</feature>
<feature type="binding site" evidence="1">
    <location>
        <position position="181"/>
    </location>
    <ligand>
        <name>ATP</name>
        <dbReference type="ChEBI" id="CHEBI:30616"/>
    </ligand>
</feature>
<feature type="binding site" evidence="1">
    <location>
        <position position="218"/>
    </location>
    <ligand>
        <name>ATP</name>
        <dbReference type="ChEBI" id="CHEBI:30616"/>
    </ligand>
</feature>
<feature type="binding site" evidence="1">
    <location>
        <position position="291"/>
    </location>
    <ligand>
        <name>DNA</name>
        <dbReference type="ChEBI" id="CHEBI:16991"/>
    </ligand>
</feature>
<feature type="binding site" evidence="1">
    <location>
        <position position="310"/>
    </location>
    <ligand>
        <name>DNA</name>
        <dbReference type="ChEBI" id="CHEBI:16991"/>
    </ligand>
</feature>
<feature type="binding site" evidence="1">
    <location>
        <position position="312"/>
    </location>
    <ligand>
        <name>DNA</name>
        <dbReference type="ChEBI" id="CHEBI:16991"/>
    </ligand>
</feature>
<feature type="binding site" evidence="1">
    <location>
        <position position="315"/>
    </location>
    <ligand>
        <name>DNA</name>
        <dbReference type="ChEBI" id="CHEBI:16991"/>
    </ligand>
</feature>
<proteinExistence type="inferred from homology"/>
<name>RUVB_STRP7</name>
<sequence length="332" mass="37289">MSRILDNEIMGDEELVERTLRPQYLREYIGQDKVKDQLQIFIEAAKMRDEALDHVLLFGPPGLGKTTMAFVIANELGVNLKQTSGPVIEKAGDLVAILNELEPGDVLFIDEIHRLPMSVEEVLYSAMEDFYIDIMIGAGEGSRSVHLELPPFTLIGATTRAGMLSNPLRARFGITGHMEYYAHADLTEIVERTADIFEMEITHEAASELALRSRGTPRIANRLLKRVRDFAQIMGNGVIDDIITDKALTMLDVDHEGLDYVDQKILRTMIEMYSGGPVGLGTLSVNIAEERETVEDMYEPYLIQKGFIMRTRSGRVATAKAYEHLGYEYSEK</sequence>
<gene>
    <name evidence="1" type="primary">ruvB</name>
    <name type="ordered locus">SP70585_0319</name>
</gene>
<keyword id="KW-0067">ATP-binding</keyword>
<keyword id="KW-0963">Cytoplasm</keyword>
<keyword id="KW-0227">DNA damage</keyword>
<keyword id="KW-0233">DNA recombination</keyword>
<keyword id="KW-0234">DNA repair</keyword>
<keyword id="KW-0238">DNA-binding</keyword>
<keyword id="KW-0378">Hydrolase</keyword>
<keyword id="KW-0547">Nucleotide-binding</keyword>
<dbReference type="EC" id="3.6.4.-" evidence="1"/>
<dbReference type="EMBL" id="CP000918">
    <property type="protein sequence ID" value="ACO17454.1"/>
    <property type="molecule type" value="Genomic_DNA"/>
</dbReference>
<dbReference type="RefSeq" id="WP_001809468.1">
    <property type="nucleotide sequence ID" value="NC_012468.1"/>
</dbReference>
<dbReference type="SMR" id="C1CB34"/>
<dbReference type="GeneID" id="45652263"/>
<dbReference type="KEGG" id="snm:SP70585_0319"/>
<dbReference type="HOGENOM" id="CLU_055599_1_0_9"/>
<dbReference type="Proteomes" id="UP000002211">
    <property type="component" value="Chromosome"/>
</dbReference>
<dbReference type="GO" id="GO:0005737">
    <property type="term" value="C:cytoplasm"/>
    <property type="evidence" value="ECO:0007669"/>
    <property type="project" value="UniProtKB-SubCell"/>
</dbReference>
<dbReference type="GO" id="GO:0048476">
    <property type="term" value="C:Holliday junction resolvase complex"/>
    <property type="evidence" value="ECO:0007669"/>
    <property type="project" value="UniProtKB-UniRule"/>
</dbReference>
<dbReference type="GO" id="GO:0005524">
    <property type="term" value="F:ATP binding"/>
    <property type="evidence" value="ECO:0007669"/>
    <property type="project" value="UniProtKB-UniRule"/>
</dbReference>
<dbReference type="GO" id="GO:0016887">
    <property type="term" value="F:ATP hydrolysis activity"/>
    <property type="evidence" value="ECO:0007669"/>
    <property type="project" value="InterPro"/>
</dbReference>
<dbReference type="GO" id="GO:0000400">
    <property type="term" value="F:four-way junction DNA binding"/>
    <property type="evidence" value="ECO:0007669"/>
    <property type="project" value="UniProtKB-UniRule"/>
</dbReference>
<dbReference type="GO" id="GO:0009378">
    <property type="term" value="F:four-way junction helicase activity"/>
    <property type="evidence" value="ECO:0007669"/>
    <property type="project" value="InterPro"/>
</dbReference>
<dbReference type="GO" id="GO:0006310">
    <property type="term" value="P:DNA recombination"/>
    <property type="evidence" value="ECO:0007669"/>
    <property type="project" value="UniProtKB-UniRule"/>
</dbReference>
<dbReference type="GO" id="GO:0006281">
    <property type="term" value="P:DNA repair"/>
    <property type="evidence" value="ECO:0007669"/>
    <property type="project" value="UniProtKB-UniRule"/>
</dbReference>
<dbReference type="CDD" id="cd00009">
    <property type="entry name" value="AAA"/>
    <property type="match status" value="1"/>
</dbReference>
<dbReference type="Gene3D" id="1.10.8.60">
    <property type="match status" value="1"/>
</dbReference>
<dbReference type="Gene3D" id="3.40.50.300">
    <property type="entry name" value="P-loop containing nucleotide triphosphate hydrolases"/>
    <property type="match status" value="1"/>
</dbReference>
<dbReference type="Gene3D" id="1.10.10.10">
    <property type="entry name" value="Winged helix-like DNA-binding domain superfamily/Winged helix DNA-binding domain"/>
    <property type="match status" value="1"/>
</dbReference>
<dbReference type="HAMAP" id="MF_00016">
    <property type="entry name" value="DNA_HJ_migration_RuvB"/>
    <property type="match status" value="1"/>
</dbReference>
<dbReference type="InterPro" id="IPR003593">
    <property type="entry name" value="AAA+_ATPase"/>
</dbReference>
<dbReference type="InterPro" id="IPR041445">
    <property type="entry name" value="AAA_lid_4"/>
</dbReference>
<dbReference type="InterPro" id="IPR004605">
    <property type="entry name" value="DNA_helicase_Holl-junc_RuvB"/>
</dbReference>
<dbReference type="InterPro" id="IPR027417">
    <property type="entry name" value="P-loop_NTPase"/>
</dbReference>
<dbReference type="InterPro" id="IPR008824">
    <property type="entry name" value="RuvB-like_N"/>
</dbReference>
<dbReference type="InterPro" id="IPR008823">
    <property type="entry name" value="RuvB_C"/>
</dbReference>
<dbReference type="InterPro" id="IPR036388">
    <property type="entry name" value="WH-like_DNA-bd_sf"/>
</dbReference>
<dbReference type="InterPro" id="IPR036390">
    <property type="entry name" value="WH_DNA-bd_sf"/>
</dbReference>
<dbReference type="NCBIfam" id="NF000868">
    <property type="entry name" value="PRK00080.1"/>
    <property type="match status" value="1"/>
</dbReference>
<dbReference type="NCBIfam" id="TIGR00635">
    <property type="entry name" value="ruvB"/>
    <property type="match status" value="1"/>
</dbReference>
<dbReference type="PANTHER" id="PTHR42848">
    <property type="match status" value="1"/>
</dbReference>
<dbReference type="PANTHER" id="PTHR42848:SF1">
    <property type="entry name" value="HOLLIDAY JUNCTION BRANCH MIGRATION COMPLEX SUBUNIT RUVB"/>
    <property type="match status" value="1"/>
</dbReference>
<dbReference type="Pfam" id="PF17864">
    <property type="entry name" value="AAA_lid_4"/>
    <property type="match status" value="1"/>
</dbReference>
<dbReference type="Pfam" id="PF05491">
    <property type="entry name" value="RuvB_C"/>
    <property type="match status" value="1"/>
</dbReference>
<dbReference type="Pfam" id="PF05496">
    <property type="entry name" value="RuvB_N"/>
    <property type="match status" value="1"/>
</dbReference>
<dbReference type="SMART" id="SM00382">
    <property type="entry name" value="AAA"/>
    <property type="match status" value="1"/>
</dbReference>
<dbReference type="SUPFAM" id="SSF52540">
    <property type="entry name" value="P-loop containing nucleoside triphosphate hydrolases"/>
    <property type="match status" value="1"/>
</dbReference>
<dbReference type="SUPFAM" id="SSF46785">
    <property type="entry name" value="Winged helix' DNA-binding domain"/>
    <property type="match status" value="1"/>
</dbReference>
<reference key="1">
    <citation type="journal article" date="2010" name="Genome Biol.">
        <title>Structure and dynamics of the pan-genome of Streptococcus pneumoniae and closely related species.</title>
        <authorList>
            <person name="Donati C."/>
            <person name="Hiller N.L."/>
            <person name="Tettelin H."/>
            <person name="Muzzi A."/>
            <person name="Croucher N.J."/>
            <person name="Angiuoli S.V."/>
            <person name="Oggioni M."/>
            <person name="Dunning Hotopp J.C."/>
            <person name="Hu F.Z."/>
            <person name="Riley D.R."/>
            <person name="Covacci A."/>
            <person name="Mitchell T.J."/>
            <person name="Bentley S.D."/>
            <person name="Kilian M."/>
            <person name="Ehrlich G.D."/>
            <person name="Rappuoli R."/>
            <person name="Moxon E.R."/>
            <person name="Masignani V."/>
        </authorList>
    </citation>
    <scope>NUCLEOTIDE SEQUENCE [LARGE SCALE GENOMIC DNA]</scope>
    <source>
        <strain>70585</strain>
    </source>
</reference>
<accession>C1CB34</accession>
<organism>
    <name type="scientific">Streptococcus pneumoniae (strain 70585)</name>
    <dbReference type="NCBI Taxonomy" id="488221"/>
    <lineage>
        <taxon>Bacteria</taxon>
        <taxon>Bacillati</taxon>
        <taxon>Bacillota</taxon>
        <taxon>Bacilli</taxon>
        <taxon>Lactobacillales</taxon>
        <taxon>Streptococcaceae</taxon>
        <taxon>Streptococcus</taxon>
    </lineage>
</organism>